<organism>
    <name type="scientific">Homo sapiens</name>
    <name type="common">Human</name>
    <dbReference type="NCBI Taxonomy" id="9606"/>
    <lineage>
        <taxon>Eukaryota</taxon>
        <taxon>Metazoa</taxon>
        <taxon>Chordata</taxon>
        <taxon>Craniata</taxon>
        <taxon>Vertebrata</taxon>
        <taxon>Euteleostomi</taxon>
        <taxon>Mammalia</taxon>
        <taxon>Eutheria</taxon>
        <taxon>Euarchontoglires</taxon>
        <taxon>Primates</taxon>
        <taxon>Haplorrhini</taxon>
        <taxon>Catarrhini</taxon>
        <taxon>Hominidae</taxon>
        <taxon>Homo</taxon>
    </lineage>
</organism>
<dbReference type="EMBL" id="AF349444">
    <property type="protein sequence ID" value="AAK29640.1"/>
    <property type="molecule type" value="mRNA"/>
</dbReference>
<dbReference type="EMBL" id="AF109873">
    <property type="protein sequence ID" value="AAG35179.1"/>
    <property type="molecule type" value="mRNA"/>
</dbReference>
<dbReference type="EMBL" id="AF092135">
    <property type="protein sequence ID" value="AAD40377.1"/>
    <property type="molecule type" value="mRNA"/>
</dbReference>
<dbReference type="EMBL" id="AL109701">
    <property type="protein sequence ID" value="CAB52022.1"/>
    <property type="molecule type" value="mRNA"/>
</dbReference>
<dbReference type="EMBL" id="AL357456">
    <property type="protein sequence ID" value="CAB93108.1"/>
    <property type="molecule type" value="mRNA"/>
</dbReference>
<dbReference type="EMBL" id="AK098383">
    <property type="protein sequence ID" value="BAC05296.1"/>
    <property type="molecule type" value="mRNA"/>
</dbReference>
<dbReference type="EMBL" id="AK315365">
    <property type="protein sequence ID" value="BAG37758.1"/>
    <property type="molecule type" value="mRNA"/>
</dbReference>
<dbReference type="EMBL" id="CH471082">
    <property type="protein sequence ID" value="EAW77357.1"/>
    <property type="molecule type" value="Genomic_DNA"/>
</dbReference>
<dbReference type="EMBL" id="BC114944">
    <property type="protein sequence ID" value="AAI14945.1"/>
    <property type="molecule type" value="mRNA"/>
</dbReference>
<dbReference type="EMBL" id="BC114946">
    <property type="protein sequence ID" value="AAI14947.1"/>
    <property type="molecule type" value="mRNA"/>
</dbReference>
<dbReference type="EMBL" id="AF274947">
    <property type="protein sequence ID" value="AAK07524.1"/>
    <property type="status" value="ALT_INIT"/>
    <property type="molecule type" value="mRNA"/>
</dbReference>
<dbReference type="CCDS" id="CCDS53941.1">
    <molecule id="Q9Y6B2-1"/>
</dbReference>
<dbReference type="RefSeq" id="NP_055150.1">
    <molecule id="Q9Y6B2-1"/>
    <property type="nucleotide sequence ID" value="NM_014335.3"/>
</dbReference>
<dbReference type="PDB" id="7SMD">
    <property type="method" value="X-ray"/>
    <property type="resolution" value="2.15 A"/>
    <property type="chains" value="B=174-187"/>
</dbReference>
<dbReference type="PDBsum" id="7SMD"/>
<dbReference type="SMR" id="Q9Y6B2"/>
<dbReference type="BioGRID" id="117243">
    <property type="interactions" value="49"/>
</dbReference>
<dbReference type="ELM" id="Q9Y6B2"/>
<dbReference type="FunCoup" id="Q9Y6B2">
    <property type="interactions" value="294"/>
</dbReference>
<dbReference type="IntAct" id="Q9Y6B2">
    <property type="interactions" value="22"/>
</dbReference>
<dbReference type="MINT" id="Q9Y6B2"/>
<dbReference type="STRING" id="9606.ENSP00000431162"/>
<dbReference type="iPTMnet" id="Q9Y6B2"/>
<dbReference type="PhosphoSitePlus" id="Q9Y6B2"/>
<dbReference type="BioMuta" id="EID1"/>
<dbReference type="DMDM" id="74721525"/>
<dbReference type="jPOST" id="Q9Y6B2"/>
<dbReference type="MassIVE" id="Q9Y6B2"/>
<dbReference type="PaxDb" id="9606-ENSP00000431162"/>
<dbReference type="PeptideAtlas" id="Q9Y6B2"/>
<dbReference type="ProteomicsDB" id="86644">
    <molecule id="Q9Y6B2-1"/>
</dbReference>
<dbReference type="ProteomicsDB" id="86645">
    <molecule id="Q9Y6B2-2"/>
</dbReference>
<dbReference type="Pumba" id="Q9Y6B2"/>
<dbReference type="Antibodypedia" id="53733">
    <property type="antibodies" value="146 antibodies from 25 providers"/>
</dbReference>
<dbReference type="DNASU" id="23741"/>
<dbReference type="Ensembl" id="ENST00000530028.3">
    <molecule id="Q9Y6B2-1"/>
    <property type="protein sequence ID" value="ENSP00000431162.2"/>
    <property type="gene ID" value="ENSG00000255302.5"/>
</dbReference>
<dbReference type="GeneID" id="23741"/>
<dbReference type="KEGG" id="hsa:23741"/>
<dbReference type="MANE-Select" id="ENST00000530028.3">
    <property type="protein sequence ID" value="ENSP00000431162.2"/>
    <property type="RefSeq nucleotide sequence ID" value="NM_014335.3"/>
    <property type="RefSeq protein sequence ID" value="NP_055150.1"/>
</dbReference>
<dbReference type="UCSC" id="uc001zxc.2">
    <molecule id="Q9Y6B2-1"/>
    <property type="organism name" value="human"/>
</dbReference>
<dbReference type="AGR" id="HGNC:1191"/>
<dbReference type="CTD" id="23741"/>
<dbReference type="DisGeNET" id="23741"/>
<dbReference type="GeneCards" id="EID1"/>
<dbReference type="HGNC" id="HGNC:1191">
    <property type="gene designation" value="EID1"/>
</dbReference>
<dbReference type="HPA" id="ENSG00000255302">
    <property type="expression patterns" value="Low tissue specificity"/>
</dbReference>
<dbReference type="MIM" id="605894">
    <property type="type" value="gene"/>
</dbReference>
<dbReference type="neXtProt" id="NX_Q9Y6B2"/>
<dbReference type="OpenTargets" id="ENSG00000255302"/>
<dbReference type="PharmGKB" id="PA26876"/>
<dbReference type="VEuPathDB" id="HostDB:ENSG00000255302"/>
<dbReference type="eggNOG" id="ENOG502RQIS">
    <property type="taxonomic scope" value="Eukaryota"/>
</dbReference>
<dbReference type="GeneTree" id="ENSGT00940000154796"/>
<dbReference type="InParanoid" id="Q9Y6B2"/>
<dbReference type="OMA" id="GCDEMID"/>
<dbReference type="OrthoDB" id="9837940at2759"/>
<dbReference type="PAN-GO" id="Q9Y6B2">
    <property type="GO annotations" value="3 GO annotations based on evolutionary models"/>
</dbReference>
<dbReference type="PhylomeDB" id="Q9Y6B2"/>
<dbReference type="TreeFam" id="TF337633"/>
<dbReference type="PathwayCommons" id="Q9Y6B2"/>
<dbReference type="SignaLink" id="Q9Y6B2"/>
<dbReference type="SIGNOR" id="Q9Y6B2"/>
<dbReference type="BioGRID-ORCS" id="23741">
    <property type="hits" value="10 hits in 1160 CRISPR screens"/>
</dbReference>
<dbReference type="ChiTaRS" id="EID1">
    <property type="organism name" value="human"/>
</dbReference>
<dbReference type="GeneWiki" id="EID1"/>
<dbReference type="GenomeRNAi" id="23741"/>
<dbReference type="Pharos" id="Q9Y6B2">
    <property type="development level" value="Tbio"/>
</dbReference>
<dbReference type="PRO" id="PR:Q9Y6B2"/>
<dbReference type="Proteomes" id="UP000005640">
    <property type="component" value="Chromosome 15"/>
</dbReference>
<dbReference type="RNAct" id="Q9Y6B2">
    <property type="molecule type" value="protein"/>
</dbReference>
<dbReference type="Bgee" id="ENSG00000255302">
    <property type="expression patterns" value="Expressed in tendon of biceps brachii and 217 other cell types or tissues"/>
</dbReference>
<dbReference type="ExpressionAtlas" id="Q9Y6B2">
    <property type="expression patterns" value="baseline and differential"/>
</dbReference>
<dbReference type="GO" id="GO:0036464">
    <property type="term" value="C:cytoplasmic ribonucleoprotein granule"/>
    <property type="evidence" value="ECO:0000314"/>
    <property type="project" value="HPA"/>
</dbReference>
<dbReference type="GO" id="GO:0005654">
    <property type="term" value="C:nucleoplasm"/>
    <property type="evidence" value="ECO:0000314"/>
    <property type="project" value="HPA"/>
</dbReference>
<dbReference type="GO" id="GO:0035035">
    <property type="term" value="F:histone acetyltransferase binding"/>
    <property type="evidence" value="ECO:0000314"/>
    <property type="project" value="UniProtKB"/>
</dbReference>
<dbReference type="GO" id="GO:0003714">
    <property type="term" value="F:transcription corepressor activity"/>
    <property type="evidence" value="ECO:0000250"/>
    <property type="project" value="UniProtKB"/>
</dbReference>
<dbReference type="GO" id="GO:0030154">
    <property type="term" value="P:cell differentiation"/>
    <property type="evidence" value="ECO:0000314"/>
    <property type="project" value="UniProtKB"/>
</dbReference>
<dbReference type="GO" id="GO:0045892">
    <property type="term" value="P:negative regulation of DNA-templated transcription"/>
    <property type="evidence" value="ECO:0000314"/>
    <property type="project" value="UniProtKB"/>
</dbReference>
<dbReference type="GO" id="GO:0000122">
    <property type="term" value="P:negative regulation of transcription by RNA polymerase II"/>
    <property type="evidence" value="ECO:0000314"/>
    <property type="project" value="MGI"/>
</dbReference>
<dbReference type="InterPro" id="IPR033258">
    <property type="entry name" value="EID"/>
</dbReference>
<dbReference type="PANTHER" id="PTHR15556:SF5">
    <property type="entry name" value="EP300-INTERACTING INHIBITOR OF DIFFERENTIATION 1"/>
    <property type="match status" value="1"/>
</dbReference>
<dbReference type="PANTHER" id="PTHR15556">
    <property type="entry name" value="EP300-INTERACTING INHIBITOR OF DIFFERENTIATION 2-RELATED"/>
    <property type="match status" value="1"/>
</dbReference>
<protein>
    <recommendedName>
        <fullName>EP300-interacting inhibitor of differentiation 1</fullName>
    </recommendedName>
    <alternativeName>
        <fullName>21 kDa pRb-associated protein</fullName>
    </alternativeName>
    <alternativeName>
        <fullName>CREBBP/EP300 inhibitory protein 1</fullName>
    </alternativeName>
    <alternativeName>
        <fullName>E1A-like inhibitor of differentiation 1</fullName>
        <shortName>EID-1</shortName>
    </alternativeName>
</protein>
<comment type="function">
    <text evidence="3 4">Interacts with RB1 and EP300 and acts as a repressor of MYOD1 transactivation. Inhibits EP300 and CBP histone acetyltransferase activity. May be involved in coupling cell cycle exit to the transcriptional activation of genes required for cellular differentiation. May act as a candidate coinhibitory factor for NR0B2 that can be directly linked to transcription inhibitory mechanisms.</text>
</comment>
<comment type="subunit">
    <text evidence="1 3 4 5 8">Interacts via its LXCXE motif with the entire pocket region of RB1. Interacts with EP300, NR0B2 and TRIM27.</text>
</comment>
<comment type="interaction">
    <interactant intactId="EBI-1049975">
        <id>Q9Y6B2</id>
    </interactant>
    <interactant intactId="EBI-311435">
        <id>O94952</id>
        <label>FBXO21</label>
    </interactant>
    <organismsDiffer>false</organismsDiffer>
    <experiments>7</experiments>
</comment>
<comment type="interaction">
    <interactant intactId="EBI-1049975">
        <id>Q9Y6B2</id>
    </interactant>
    <interactant intactId="EBI-718177">
        <id>Q99608</id>
        <label>NDN</label>
    </interactant>
    <organismsDiffer>false</organismsDiffer>
    <experiments>3</experiments>
</comment>
<comment type="interaction">
    <interactant intactId="EBI-1049975">
        <id>Q9Y6B2</id>
    </interactant>
    <interactant intactId="EBI-1801080">
        <id>P25233</id>
        <label>Ndn</label>
    </interactant>
    <organismsDiffer>true</organismsDiffer>
    <experiments>5</experiments>
</comment>
<comment type="subcellular location">
    <subcellularLocation>
        <location evidence="5">Nucleus</location>
    </subcellularLocation>
    <subcellularLocation>
        <location evidence="5">Cytoplasm</location>
    </subcellularLocation>
    <text evidence="1 5">May shuttle between nucleus and cytoplasm.</text>
</comment>
<comment type="alternative products">
    <event type="alternative splicing"/>
    <isoform>
        <id>Q9Y6B2-1</id>
        <name evidence="4 5 7 9">1</name>
        <sequence type="displayed"/>
    </isoform>
    <isoform>
        <id>Q9Y6B2-2</id>
        <name evidence="6">2</name>
        <sequence type="described" ref="VSP_052454"/>
    </isoform>
</comment>
<comment type="tissue specificity">
    <text evidence="4 5">Widely expressed. Most abundantly expressed in heart, skeletal muscle, pancreas, brain and testis. Expressed at much lower levels in placenta and peripheral blood leukocyte. Barely detectable in lung. Also weakly expressed in lung carcinoma A-549 and various leukemia cell lines.</text>
</comment>
<comment type="developmental stage">
    <text evidence="4">Expression decreased with development in ventricular tissue while remaining highly expressed in adult atrial tissue. In primary cultures of human skeletal myocytes, expression decreased during myogenic differentiation (at protein level).</text>
</comment>
<comment type="induction">
    <text evidence="3">Down-regulated in differentiating U-937 leukemia cells.</text>
</comment>
<comment type="PTM">
    <text evidence="3">Ubiquitinated in U2OS osteosarcoma cells and is rapidly degraded by proteasome as cells exit the cell cycle exit.</text>
</comment>
<comment type="miscellaneous">
    <text evidence="4">Inhibition of MYOD1 may be partly due to the ability of EID1 to bind and inhibit EP300 histone acetyltransferase activity.</text>
</comment>
<comment type="sequence caution" evidence="11">
    <conflict type="erroneous initiation">
        <sequence resource="EMBL-CDS" id="AAK07524"/>
    </conflict>
</comment>
<keyword id="KW-0002">3D-structure</keyword>
<keyword id="KW-0025">Alternative splicing</keyword>
<keyword id="KW-0131">Cell cycle</keyword>
<keyword id="KW-0963">Cytoplasm</keyword>
<keyword id="KW-0221">Differentiation</keyword>
<keyword id="KW-0539">Nucleus</keyword>
<keyword id="KW-1267">Proteomics identification</keyword>
<keyword id="KW-1185">Reference proteome</keyword>
<keyword id="KW-0678">Repressor</keyword>
<keyword id="KW-0804">Transcription</keyword>
<keyword id="KW-0805">Transcription regulation</keyword>
<keyword id="KW-0832">Ubl conjugation</keyword>
<name>EID1_HUMAN</name>
<reference evidence="11 17" key="1">
    <citation type="journal article" date="2000" name="Mol. Cell. Biol.">
        <title>A novel Rb- and p300-binding protein inhibits transactivation by MyoD.</title>
        <authorList>
            <person name="MacLellan W.R."/>
            <person name="Xiao G."/>
            <person name="Abdellatif M."/>
            <person name="Schneider M.D."/>
        </authorList>
    </citation>
    <scope>NUCLEOTIDE SEQUENCE [MRNA] (ISOFORM 1)</scope>
    <scope>FUNCTION</scope>
    <scope>INTERACTION WITH EP300 AND RB1</scope>
    <scope>TISSUE SPECIFICITY</scope>
    <scope>DEVELOPMENTAL STAGE</scope>
    <scope>MUTAGENESIS OF CYS-180</scope>
</reference>
<reference evidence="11 13" key="2">
    <citation type="journal article" date="2001" name="Gene">
        <title>Identification and characterization of a novel human cDNA encoding a 21 kDa pRb-associated protein.</title>
        <authorList>
            <person name="Wen H."/>
            <person name="Ao S."/>
        </authorList>
    </citation>
    <scope>NUCLEOTIDE SEQUENCE [MRNA] (ISOFORM 1)</scope>
    <scope>INTERACTION WITH RB1</scope>
    <scope>SUBCELLULAR LOCATION</scope>
    <scope>TISSUE SPECIFICITY</scope>
    <scope>MUTAGENESIS OF LEU-178; CYS-180 AND GLU-182</scope>
</reference>
<reference evidence="11 12" key="3">
    <citation type="submission" date="1998-09" db="EMBL/GenBank/DDBJ databases">
        <title>Human PTD014 mRNA, complete cds.</title>
        <authorList>
            <person name="Huang Q."/>
            <person name="Peng Y."/>
            <person name="Dai M."/>
            <person name="Song H."/>
            <person name="Mao Y."/>
            <person name="Zhang Q."/>
            <person name="Mao M."/>
            <person name="Fu G."/>
            <person name="Luo M."/>
            <person name="Chen J."/>
            <person name="Hu R."/>
        </authorList>
    </citation>
    <scope>NUCLEOTIDE SEQUENCE [LARGE SCALE MRNA] (ISOFORM 1)</scope>
    <source>
        <tissue evidence="12">Pituitary tumor</tissue>
    </source>
</reference>
<reference evidence="11 12" key="4">
    <citation type="submission" date="1999-05" db="EMBL/GenBank/DDBJ databases">
        <authorList>
            <consortium name="The European IMAGE consortium"/>
        </authorList>
    </citation>
    <scope>NUCLEOTIDE SEQUENCE [LARGE SCALE MRNA] (ISOFORM 1)</scope>
    <source>
        <tissue evidence="19">Neonatal brain</tissue>
        <tissue evidence="20">Retina</tissue>
    </source>
</reference>
<reference evidence="11 18" key="5">
    <citation type="journal article" date="2004" name="Nat. Genet.">
        <title>Complete sequencing and characterization of 21,243 full-length human cDNAs.</title>
        <authorList>
            <person name="Ota T."/>
            <person name="Suzuki Y."/>
            <person name="Nishikawa T."/>
            <person name="Otsuki T."/>
            <person name="Sugiyama T."/>
            <person name="Irie R."/>
            <person name="Wakamatsu A."/>
            <person name="Hayashi K."/>
            <person name="Sato H."/>
            <person name="Nagai K."/>
            <person name="Kimura K."/>
            <person name="Makita H."/>
            <person name="Sekine M."/>
            <person name="Obayashi M."/>
            <person name="Nishi T."/>
            <person name="Shibahara T."/>
            <person name="Tanaka T."/>
            <person name="Ishii S."/>
            <person name="Yamamoto J."/>
            <person name="Saito K."/>
            <person name="Kawai Y."/>
            <person name="Isono Y."/>
            <person name="Nakamura Y."/>
            <person name="Nagahari K."/>
            <person name="Murakami K."/>
            <person name="Yasuda T."/>
            <person name="Iwayanagi T."/>
            <person name="Wagatsuma M."/>
            <person name="Shiratori A."/>
            <person name="Sudo H."/>
            <person name="Hosoiri T."/>
            <person name="Kaku Y."/>
            <person name="Kodaira H."/>
            <person name="Kondo H."/>
            <person name="Sugawara M."/>
            <person name="Takahashi M."/>
            <person name="Kanda K."/>
            <person name="Yokoi T."/>
            <person name="Furuya T."/>
            <person name="Kikkawa E."/>
            <person name="Omura Y."/>
            <person name="Abe K."/>
            <person name="Kamihara K."/>
            <person name="Katsuta N."/>
            <person name="Sato K."/>
            <person name="Tanikawa M."/>
            <person name="Yamazaki M."/>
            <person name="Ninomiya K."/>
            <person name="Ishibashi T."/>
            <person name="Yamashita H."/>
            <person name="Murakawa K."/>
            <person name="Fujimori K."/>
            <person name="Tanai H."/>
            <person name="Kimata M."/>
            <person name="Watanabe M."/>
            <person name="Hiraoka S."/>
            <person name="Chiba Y."/>
            <person name="Ishida S."/>
            <person name="Ono Y."/>
            <person name="Takiguchi S."/>
            <person name="Watanabe S."/>
            <person name="Yosida M."/>
            <person name="Hotuta T."/>
            <person name="Kusano J."/>
            <person name="Kanehori K."/>
            <person name="Takahashi-Fujii A."/>
            <person name="Hara H."/>
            <person name="Tanase T.-O."/>
            <person name="Nomura Y."/>
            <person name="Togiya S."/>
            <person name="Komai F."/>
            <person name="Hara R."/>
            <person name="Takeuchi K."/>
            <person name="Arita M."/>
            <person name="Imose N."/>
            <person name="Musashino K."/>
            <person name="Yuuki H."/>
            <person name="Oshima A."/>
            <person name="Sasaki N."/>
            <person name="Aotsuka S."/>
            <person name="Yoshikawa Y."/>
            <person name="Matsunawa H."/>
            <person name="Ichihara T."/>
            <person name="Shiohata N."/>
            <person name="Sano S."/>
            <person name="Moriya S."/>
            <person name="Momiyama H."/>
            <person name="Satoh N."/>
            <person name="Takami S."/>
            <person name="Terashima Y."/>
            <person name="Suzuki O."/>
            <person name="Nakagawa S."/>
            <person name="Senoh A."/>
            <person name="Mizoguchi H."/>
            <person name="Goto Y."/>
            <person name="Shimizu F."/>
            <person name="Wakebe H."/>
            <person name="Hishigaki H."/>
            <person name="Watanabe T."/>
            <person name="Sugiyama A."/>
            <person name="Takemoto M."/>
            <person name="Kawakami B."/>
            <person name="Yamazaki M."/>
            <person name="Watanabe K."/>
            <person name="Kumagai A."/>
            <person name="Itakura S."/>
            <person name="Fukuzumi Y."/>
            <person name="Fujimori Y."/>
            <person name="Komiyama M."/>
            <person name="Tashiro H."/>
            <person name="Tanigami A."/>
            <person name="Fujiwara T."/>
            <person name="Ono T."/>
            <person name="Yamada K."/>
            <person name="Fujii Y."/>
            <person name="Ozaki K."/>
            <person name="Hirao M."/>
            <person name="Ohmori Y."/>
            <person name="Kawabata A."/>
            <person name="Hikiji T."/>
            <person name="Kobatake N."/>
            <person name="Inagaki H."/>
            <person name="Ikema Y."/>
            <person name="Okamoto S."/>
            <person name="Okitani R."/>
            <person name="Kawakami T."/>
            <person name="Noguchi S."/>
            <person name="Itoh T."/>
            <person name="Shigeta K."/>
            <person name="Senba T."/>
            <person name="Matsumura K."/>
            <person name="Nakajima Y."/>
            <person name="Mizuno T."/>
            <person name="Morinaga M."/>
            <person name="Sasaki M."/>
            <person name="Togashi T."/>
            <person name="Oyama M."/>
            <person name="Hata H."/>
            <person name="Watanabe M."/>
            <person name="Komatsu T."/>
            <person name="Mizushima-Sugano J."/>
            <person name="Satoh T."/>
            <person name="Shirai Y."/>
            <person name="Takahashi Y."/>
            <person name="Nakagawa K."/>
            <person name="Okumura K."/>
            <person name="Nagase T."/>
            <person name="Nomura N."/>
            <person name="Kikuchi H."/>
            <person name="Masuho Y."/>
            <person name="Yamashita R."/>
            <person name="Nakai K."/>
            <person name="Yada T."/>
            <person name="Nakamura Y."/>
            <person name="Ohara O."/>
            <person name="Isogai T."/>
            <person name="Sugano S."/>
        </authorList>
    </citation>
    <scope>NUCLEOTIDE SEQUENCE [LARGE SCALE MRNA] (ISOFORMS 1 AND 2)</scope>
    <source>
        <tissue evidence="18">Brain</tissue>
    </source>
</reference>
<reference evidence="11 12" key="6">
    <citation type="submission" date="2005-07" db="EMBL/GenBank/DDBJ databases">
        <authorList>
            <person name="Mural R.J."/>
            <person name="Istrail S."/>
            <person name="Sutton G.G."/>
            <person name="Florea L."/>
            <person name="Halpern A.L."/>
            <person name="Mobarry C.M."/>
            <person name="Lippert R."/>
            <person name="Walenz B."/>
            <person name="Shatkay H."/>
            <person name="Dew I."/>
            <person name="Miller J.R."/>
            <person name="Flanigan M.J."/>
            <person name="Edwards N.J."/>
            <person name="Bolanos R."/>
            <person name="Fasulo D."/>
            <person name="Halldorsson B.V."/>
            <person name="Hannenhalli S."/>
            <person name="Turner R."/>
            <person name="Yooseph S."/>
            <person name="Lu F."/>
            <person name="Nusskern D.R."/>
            <person name="Shue B.C."/>
            <person name="Zheng X.H."/>
            <person name="Zhong F."/>
            <person name="Delcher A.L."/>
            <person name="Huson D.H."/>
            <person name="Kravitz S.A."/>
            <person name="Mouchard L."/>
            <person name="Reinert K."/>
            <person name="Remington K.A."/>
            <person name="Clark A.G."/>
            <person name="Waterman M.S."/>
            <person name="Eichler E.E."/>
            <person name="Adams M.D."/>
            <person name="Hunkapiller M.W."/>
            <person name="Myers E.W."/>
            <person name="Venter J.C."/>
        </authorList>
    </citation>
    <scope>NUCLEOTIDE SEQUENCE [LARGE SCALE GENOMIC DNA]</scope>
</reference>
<reference evidence="11 14" key="7">
    <citation type="journal article" date="2004" name="Genome Res.">
        <title>The status, quality, and expansion of the NIH full-length cDNA project: the Mammalian Gene Collection (MGC).</title>
        <authorList>
            <consortium name="The MGC Project Team"/>
        </authorList>
    </citation>
    <scope>NUCLEOTIDE SEQUENCE [LARGE SCALE MRNA] (ISOFORM 1)</scope>
</reference>
<reference evidence="11 12" key="8">
    <citation type="submission" date="2000-06" db="EMBL/GenBank/DDBJ databases">
        <title>Human acute promyelocytic leukemia cell line NB4's apoptosis related genes.</title>
        <authorList>
            <person name="Yu W.-Q."/>
            <person name="Sun B.-Z."/>
            <person name="Chai Y.-B."/>
            <person name="Zhu F."/>
            <person name="Liu X.-S."/>
            <person name="Li Z."/>
            <person name="Lu F."/>
            <person name="Yan W."/>
            <person name="Yang H."/>
            <person name="Zhao Z.-L."/>
        </authorList>
    </citation>
    <scope>NUCLEOTIDE SEQUENCE [LARGE SCALE MRNA] OF 97-187</scope>
    <source>
        <tissue evidence="16">Promyelocytic leukemia</tissue>
    </source>
</reference>
<reference evidence="11" key="9">
    <citation type="journal article" date="2000" name="Mol. Cell. Biol.">
        <title>Cells degrade a novel inhibitor of differentiation with E1A-like properties upon exiting the cell cycle.</title>
        <authorList>
            <person name="Miyake S."/>
            <person name="Sellers W.R."/>
            <person name="Safran M."/>
            <person name="Li X."/>
            <person name="Zhao W."/>
            <person name="Grossman S.R."/>
            <person name="Gan J."/>
            <person name="DeCaprio J.A."/>
            <person name="Adams P.D."/>
            <person name="Kaelin W.G. Jr."/>
        </authorList>
    </citation>
    <scope>FUNCTION</scope>
    <scope>INTERACTION WITH EP300 AND RB1</scope>
    <scope>UBIQUITINATION</scope>
    <scope>INDUCTION</scope>
</reference>
<reference evidence="11" key="10">
    <citation type="journal article" date="2005" name="Mol. Cell">
        <title>Selective ablation of retinoblastoma protein function by the RET finger protein.</title>
        <authorList>
            <person name="Krutzfeldt M."/>
            <person name="Ellis M."/>
            <person name="Weekes D.B."/>
            <person name="Bull J.J."/>
            <person name="Eilers M."/>
            <person name="Vivanco M.D."/>
            <person name="Sellers W.R."/>
            <person name="Mittnacht S."/>
        </authorList>
    </citation>
    <scope>INTERACTION WITH TRIM27</scope>
</reference>
<accession>Q9Y6B2</accession>
<accession>B2RD11</accession>
<accession>Q8N7I4</accession>
<accession>Q9BZT9</accession>
<proteinExistence type="evidence at protein level"/>
<feature type="chain" id="PRO_0000289156" description="EP300-interacting inhibitor of differentiation 1">
    <location>
        <begin position="1"/>
        <end position="187"/>
    </location>
</feature>
<feature type="region of interest" description="Disordered" evidence="2">
    <location>
        <begin position="1"/>
        <end position="118"/>
    </location>
</feature>
<feature type="region of interest" description="Interaction with NR0B2" evidence="1">
    <location>
        <begin position="54"/>
        <end position="120"/>
    </location>
</feature>
<feature type="short sequence motif" description="LXCXE motif" evidence="4">
    <location>
        <begin position="178"/>
        <end position="182"/>
    </location>
</feature>
<feature type="compositionally biased region" description="Acidic residues" evidence="2">
    <location>
        <begin position="52"/>
        <end position="63"/>
    </location>
</feature>
<feature type="compositionally biased region" description="Acidic residues" evidence="2">
    <location>
        <begin position="93"/>
        <end position="116"/>
    </location>
</feature>
<feature type="splice variant" id="VSP_052454" description="In isoform 2." evidence="10">
    <location>
        <begin position="65"/>
        <end position="87"/>
    </location>
</feature>
<feature type="mutagenesis site" description="Abolishes RB1 binding." evidence="5">
    <original>L</original>
    <variation>S</variation>
    <location>
        <position position="178"/>
    </location>
</feature>
<feature type="mutagenesis site" description="Abolishes RB1 binding." evidence="4 5">
    <original>C</original>
    <variation>G</variation>
    <location>
        <position position="180"/>
    </location>
</feature>
<feature type="mutagenesis site" description="Abolishes RB1 binding." evidence="5">
    <original>E</original>
    <variation>Q</variation>
    <location>
        <position position="182"/>
    </location>
</feature>
<sequence length="187" mass="20876">MSEMAELSELYEESSDLQMDVMPGEGDLPQMEVGSGSRELSLRPSRSGAQQLEEEGPMEEEEAQPMAAPEGKRSLANGPNAGEQPGQVAGADFESEDEGEEFDDWEDDYDYPEEEQLSGAGYRVSAALEEADKMFLRTREPALDGGFQMHYEKTPFDQLAFIEELFSLMVVNRLTEELGCDEIIDRE</sequence>
<evidence type="ECO:0000250" key="1">
    <source>
        <dbReference type="UniProtKB" id="Q9DCR4"/>
    </source>
</evidence>
<evidence type="ECO:0000256" key="2">
    <source>
        <dbReference type="SAM" id="MobiDB-lite"/>
    </source>
</evidence>
<evidence type="ECO:0000269" key="3">
    <source>
    </source>
</evidence>
<evidence type="ECO:0000269" key="4">
    <source>
    </source>
</evidence>
<evidence type="ECO:0000269" key="5">
    <source>
    </source>
</evidence>
<evidence type="ECO:0000269" key="6">
    <source>
    </source>
</evidence>
<evidence type="ECO:0000269" key="7">
    <source>
    </source>
</evidence>
<evidence type="ECO:0000269" key="8">
    <source>
    </source>
</evidence>
<evidence type="ECO:0000269" key="9">
    <source ref="3"/>
</evidence>
<evidence type="ECO:0000303" key="10">
    <source>
    </source>
</evidence>
<evidence type="ECO:0000305" key="11"/>
<evidence type="ECO:0000312" key="12">
    <source>
        <dbReference type="EMBL" id="AAD40377.1"/>
    </source>
</evidence>
<evidence type="ECO:0000312" key="13">
    <source>
        <dbReference type="EMBL" id="AAG35179.1"/>
    </source>
</evidence>
<evidence type="ECO:0000312" key="14">
    <source>
        <dbReference type="EMBL" id="AAI14945.1"/>
    </source>
</evidence>
<evidence type="ECO:0000312" key="15">
    <source>
        <dbReference type="EMBL" id="AAI14947.1"/>
    </source>
</evidence>
<evidence type="ECO:0000312" key="16">
    <source>
        <dbReference type="EMBL" id="AAK07524.1"/>
    </source>
</evidence>
<evidence type="ECO:0000312" key="17">
    <source>
        <dbReference type="EMBL" id="AAK29640.1"/>
    </source>
</evidence>
<evidence type="ECO:0000312" key="18">
    <source>
        <dbReference type="EMBL" id="BAC05296.1"/>
    </source>
</evidence>
<evidence type="ECO:0000312" key="19">
    <source>
        <dbReference type="EMBL" id="CAB52022.1"/>
    </source>
</evidence>
<evidence type="ECO:0000312" key="20">
    <source>
        <dbReference type="EMBL" id="CAB93108.1"/>
    </source>
</evidence>
<evidence type="ECO:0000312" key="21">
    <source>
        <dbReference type="HGNC" id="HGNC:1191"/>
    </source>
</evidence>
<gene>
    <name evidence="15" type="primary">EID1</name>
    <name type="synonym">C15orf3</name>
    <name evidence="21" type="synonym">CRI1</name>
    <name type="synonym">RBP21</name>
    <name type="ORF">PNAS-22</name>
    <name type="ORF">PTD014</name>
</gene>